<accession>Q1MWF2</accession>
<keyword id="KW-0249">Electron transport</keyword>
<keyword id="KW-0472">Membrane</keyword>
<keyword id="KW-0496">Mitochondrion</keyword>
<keyword id="KW-0999">Mitochondrion inner membrane</keyword>
<keyword id="KW-0520">NAD</keyword>
<keyword id="KW-0679">Respiratory chain</keyword>
<keyword id="KW-1278">Translocase</keyword>
<keyword id="KW-0812">Transmembrane</keyword>
<keyword id="KW-1133">Transmembrane helix</keyword>
<keyword id="KW-0813">Transport</keyword>
<keyword id="KW-0830">Ubiquinone</keyword>
<dbReference type="EC" id="7.1.1.2"/>
<dbReference type="EMBL" id="AB241056">
    <property type="protein sequence ID" value="BAE94014.1"/>
    <property type="molecule type" value="Genomic_DNA"/>
</dbReference>
<dbReference type="RefSeq" id="YP_637057.1">
    <property type="nucleotide sequence ID" value="NC_008136.1"/>
</dbReference>
<dbReference type="SMR" id="Q1MWF2"/>
<dbReference type="GeneID" id="4108358"/>
<dbReference type="CTD" id="4539"/>
<dbReference type="GO" id="GO:0005743">
    <property type="term" value="C:mitochondrial inner membrane"/>
    <property type="evidence" value="ECO:0000250"/>
    <property type="project" value="UniProtKB"/>
</dbReference>
<dbReference type="GO" id="GO:0045271">
    <property type="term" value="C:respiratory chain complex I"/>
    <property type="evidence" value="ECO:0000250"/>
    <property type="project" value="UniProtKB"/>
</dbReference>
<dbReference type="GO" id="GO:0008137">
    <property type="term" value="F:NADH dehydrogenase (ubiquinone) activity"/>
    <property type="evidence" value="ECO:0000250"/>
    <property type="project" value="UniProtKB"/>
</dbReference>
<dbReference type="GO" id="GO:0042773">
    <property type="term" value="P:ATP synthesis coupled electron transport"/>
    <property type="evidence" value="ECO:0007669"/>
    <property type="project" value="InterPro"/>
</dbReference>
<dbReference type="FunFam" id="1.10.287.3510:FF:000002">
    <property type="entry name" value="NADH-ubiquinone oxidoreductase chain 4L"/>
    <property type="match status" value="1"/>
</dbReference>
<dbReference type="Gene3D" id="1.10.287.3510">
    <property type="match status" value="1"/>
</dbReference>
<dbReference type="InterPro" id="IPR001133">
    <property type="entry name" value="NADH_UbQ_OxRdtase_chain4L/K"/>
</dbReference>
<dbReference type="InterPro" id="IPR039428">
    <property type="entry name" value="NUOK/Mnh_C1-like"/>
</dbReference>
<dbReference type="PANTHER" id="PTHR11434:SF0">
    <property type="entry name" value="NADH-UBIQUINONE OXIDOREDUCTASE CHAIN 4L"/>
    <property type="match status" value="1"/>
</dbReference>
<dbReference type="PANTHER" id="PTHR11434">
    <property type="entry name" value="NADH-UBIQUINONE OXIDOREDUCTASE SUBUNIT ND4L"/>
    <property type="match status" value="1"/>
</dbReference>
<dbReference type="Pfam" id="PF00420">
    <property type="entry name" value="Oxidored_q2"/>
    <property type="match status" value="1"/>
</dbReference>
<geneLocation type="mitochondrion"/>
<evidence type="ECO:0000250" key="1">
    <source>
        <dbReference type="UniProtKB" id="P03901"/>
    </source>
</evidence>
<evidence type="ECO:0000250" key="2">
    <source>
        <dbReference type="UniProtKB" id="P03902"/>
    </source>
</evidence>
<evidence type="ECO:0000255" key="3"/>
<evidence type="ECO:0000305" key="4"/>
<comment type="function">
    <text evidence="1">Core subunit of the mitochondrial membrane respiratory chain NADH dehydrogenase (Complex I) which catalyzes electron transfer from NADH through the respiratory chain, using ubiquinone as an electron acceptor. Part of the enzyme membrane arm which is embedded in the lipid bilayer and involved in proton translocation.</text>
</comment>
<comment type="catalytic activity">
    <reaction evidence="1">
        <text>a ubiquinone + NADH + 5 H(+)(in) = a ubiquinol + NAD(+) + 4 H(+)(out)</text>
        <dbReference type="Rhea" id="RHEA:29091"/>
        <dbReference type="Rhea" id="RHEA-COMP:9565"/>
        <dbReference type="Rhea" id="RHEA-COMP:9566"/>
        <dbReference type="ChEBI" id="CHEBI:15378"/>
        <dbReference type="ChEBI" id="CHEBI:16389"/>
        <dbReference type="ChEBI" id="CHEBI:17976"/>
        <dbReference type="ChEBI" id="CHEBI:57540"/>
        <dbReference type="ChEBI" id="CHEBI:57945"/>
        <dbReference type="EC" id="7.1.1.2"/>
    </reaction>
    <physiologicalReaction direction="left-to-right" evidence="1">
        <dbReference type="Rhea" id="RHEA:29092"/>
    </physiologicalReaction>
</comment>
<comment type="subunit">
    <text evidence="2">Core subunit of respiratory chain NADH dehydrogenase (Complex I) which is composed of 45 different subunits.</text>
</comment>
<comment type="subcellular location">
    <subcellularLocation>
        <location evidence="2">Mitochondrion inner membrane</location>
        <topology evidence="3">Multi-pass membrane protein</topology>
    </subcellularLocation>
</comment>
<comment type="similarity">
    <text evidence="4">Belongs to the complex I subunit 4L family.</text>
</comment>
<name>NU4LM_LAGHI</name>
<organism>
    <name type="scientific">Lagorchestes hirsutus</name>
    <name type="common">Rufous hare-wallaby</name>
    <name type="synonym">Western hare-wallaby</name>
    <dbReference type="NCBI Taxonomy" id="65632"/>
    <lineage>
        <taxon>Eukaryota</taxon>
        <taxon>Metazoa</taxon>
        <taxon>Chordata</taxon>
        <taxon>Craniata</taxon>
        <taxon>Vertebrata</taxon>
        <taxon>Euteleostomi</taxon>
        <taxon>Mammalia</taxon>
        <taxon>Metatheria</taxon>
        <taxon>Diprotodontia</taxon>
        <taxon>Macropodidae</taxon>
        <taxon>Lagorchestes</taxon>
    </lineage>
</organism>
<feature type="chain" id="PRO_0000275036" description="NADH-ubiquinone oxidoreductase chain 4L">
    <location>
        <begin position="1"/>
        <end position="98"/>
    </location>
</feature>
<feature type="transmembrane region" description="Helical" evidence="3">
    <location>
        <begin position="1"/>
        <end position="21"/>
    </location>
</feature>
<feature type="transmembrane region" description="Helical" evidence="3">
    <location>
        <begin position="28"/>
        <end position="48"/>
    </location>
</feature>
<feature type="transmembrane region" description="Helical" evidence="3">
    <location>
        <begin position="59"/>
        <end position="79"/>
    </location>
</feature>
<protein>
    <recommendedName>
        <fullName>NADH-ubiquinone oxidoreductase chain 4L</fullName>
        <ecNumber>7.1.1.2</ecNumber>
    </recommendedName>
    <alternativeName>
        <fullName>NADH dehydrogenase subunit 4L</fullName>
    </alternativeName>
</protein>
<reference key="1">
    <citation type="journal article" date="2006" name="Genes Genet. Syst.">
        <title>Phylogenetic analysis of diprotodontian marsupials based on complete mitochondrial genomes.</title>
        <authorList>
            <person name="Munemasa M."/>
            <person name="Nikaido M."/>
            <person name="Donnellan S."/>
            <person name="Austin C.C."/>
            <person name="Okada N."/>
            <person name="Hasegawa M."/>
        </authorList>
    </citation>
    <scope>NUCLEOTIDE SEQUENCE [GENOMIC DNA]</scope>
    <source>
        <tissue>Liver</tissue>
    </source>
</reference>
<proteinExistence type="inferred from homology"/>
<gene>
    <name type="primary">MT-ND4L</name>
    <name type="synonym">MTND4L</name>
    <name type="synonym">NADH4L</name>
    <name type="synonym">ND4L</name>
</gene>
<sequence length="98" mass="10729">MMSINLNLIMAFLLALAGVLIYRSHLMSTLLCLEGMMLSLFILMALLISHFHMFSASMAPLILLVFSACEAGVGLALLVKTSSNYGNDYVQNLNLLQC</sequence>